<sequence>MEIGVDIVEIARIRSSYDRFGEAFMKKILTSAEMAQCLSKPDPVASLAGRFAAKEAVSKALGTGIAKGLTWHSIEVLNDETGKPCVSVYAPSFSGRVSISISHDRYSAVAMALFEPR</sequence>
<reference key="1">
    <citation type="journal article" date="2002" name="Proc. Natl. Acad. Sci. U.S.A.">
        <title>The complete genome sequence of Chlorobium tepidum TLS, a photosynthetic, anaerobic, green-sulfur bacterium.</title>
        <authorList>
            <person name="Eisen J.A."/>
            <person name="Nelson K.E."/>
            <person name="Paulsen I.T."/>
            <person name="Heidelberg J.F."/>
            <person name="Wu M."/>
            <person name="Dodson R.J."/>
            <person name="DeBoy R.T."/>
            <person name="Gwinn M.L."/>
            <person name="Nelson W.C."/>
            <person name="Haft D.H."/>
            <person name="Hickey E.K."/>
            <person name="Peterson J.D."/>
            <person name="Durkin A.S."/>
            <person name="Kolonay J.F."/>
            <person name="Yang F."/>
            <person name="Holt I.E."/>
            <person name="Umayam L.A."/>
            <person name="Mason T.M."/>
            <person name="Brenner M."/>
            <person name="Shea T.P."/>
            <person name="Parksey D.S."/>
            <person name="Nierman W.C."/>
            <person name="Feldblyum T.V."/>
            <person name="Hansen C.L."/>
            <person name="Craven M.B."/>
            <person name="Radune D."/>
            <person name="Vamathevan J.J."/>
            <person name="Khouri H.M."/>
            <person name="White O."/>
            <person name="Gruber T.M."/>
            <person name="Ketchum K.A."/>
            <person name="Venter J.C."/>
            <person name="Tettelin H."/>
            <person name="Bryant D.A."/>
            <person name="Fraser C.M."/>
        </authorList>
    </citation>
    <scope>NUCLEOTIDE SEQUENCE [LARGE SCALE GENOMIC DNA]</scope>
    <source>
        <strain>ATCC 49652 / DSM 12025 / NBRC 103806 / TLS</strain>
    </source>
</reference>
<gene>
    <name evidence="1" type="primary">acpS</name>
    <name type="ordered locus">CT1935</name>
</gene>
<comment type="function">
    <text evidence="1">Transfers the 4'-phosphopantetheine moiety from coenzyme A to a Ser of acyl-carrier-protein.</text>
</comment>
<comment type="catalytic activity">
    <reaction evidence="1">
        <text>apo-[ACP] + CoA = holo-[ACP] + adenosine 3',5'-bisphosphate + H(+)</text>
        <dbReference type="Rhea" id="RHEA:12068"/>
        <dbReference type="Rhea" id="RHEA-COMP:9685"/>
        <dbReference type="Rhea" id="RHEA-COMP:9690"/>
        <dbReference type="ChEBI" id="CHEBI:15378"/>
        <dbReference type="ChEBI" id="CHEBI:29999"/>
        <dbReference type="ChEBI" id="CHEBI:57287"/>
        <dbReference type="ChEBI" id="CHEBI:58343"/>
        <dbReference type="ChEBI" id="CHEBI:64479"/>
        <dbReference type="EC" id="2.7.8.7"/>
    </reaction>
</comment>
<comment type="cofactor">
    <cofactor evidence="1">
        <name>Mg(2+)</name>
        <dbReference type="ChEBI" id="CHEBI:18420"/>
    </cofactor>
</comment>
<comment type="subcellular location">
    <subcellularLocation>
        <location evidence="1">Cytoplasm</location>
    </subcellularLocation>
</comment>
<comment type="similarity">
    <text evidence="1">Belongs to the P-Pant transferase superfamily. AcpS family.</text>
</comment>
<evidence type="ECO:0000255" key="1">
    <source>
        <dbReference type="HAMAP-Rule" id="MF_00101"/>
    </source>
</evidence>
<feature type="chain" id="PRO_0000175633" description="Holo-[acyl-carrier-protein] synthase">
    <location>
        <begin position="1"/>
        <end position="117"/>
    </location>
</feature>
<feature type="binding site" evidence="1">
    <location>
        <position position="6"/>
    </location>
    <ligand>
        <name>Mg(2+)</name>
        <dbReference type="ChEBI" id="CHEBI:18420"/>
    </ligand>
</feature>
<feature type="binding site" evidence="1">
    <location>
        <position position="55"/>
    </location>
    <ligand>
        <name>Mg(2+)</name>
        <dbReference type="ChEBI" id="CHEBI:18420"/>
    </ligand>
</feature>
<keyword id="KW-0963">Cytoplasm</keyword>
<keyword id="KW-0275">Fatty acid biosynthesis</keyword>
<keyword id="KW-0276">Fatty acid metabolism</keyword>
<keyword id="KW-0444">Lipid biosynthesis</keyword>
<keyword id="KW-0443">Lipid metabolism</keyword>
<keyword id="KW-0460">Magnesium</keyword>
<keyword id="KW-0479">Metal-binding</keyword>
<keyword id="KW-1185">Reference proteome</keyword>
<keyword id="KW-0808">Transferase</keyword>
<accession>Q8KB56</accession>
<dbReference type="EC" id="2.7.8.7" evidence="1"/>
<dbReference type="EMBL" id="AE006470">
    <property type="protein sequence ID" value="AAM73154.1"/>
    <property type="molecule type" value="Genomic_DNA"/>
</dbReference>
<dbReference type="RefSeq" id="NP_662812.1">
    <property type="nucleotide sequence ID" value="NC_002932.3"/>
</dbReference>
<dbReference type="RefSeq" id="WP_010933592.1">
    <property type="nucleotide sequence ID" value="NC_002932.3"/>
</dbReference>
<dbReference type="SMR" id="Q8KB56"/>
<dbReference type="STRING" id="194439.CT1935"/>
<dbReference type="EnsemblBacteria" id="AAM73154">
    <property type="protein sequence ID" value="AAM73154"/>
    <property type="gene ID" value="CT1935"/>
</dbReference>
<dbReference type="KEGG" id="cte:CT1935"/>
<dbReference type="PATRIC" id="fig|194439.7.peg.1753"/>
<dbReference type="eggNOG" id="COG0736">
    <property type="taxonomic scope" value="Bacteria"/>
</dbReference>
<dbReference type="HOGENOM" id="CLU_089696_0_2_10"/>
<dbReference type="OrthoDB" id="517356at2"/>
<dbReference type="Proteomes" id="UP000001007">
    <property type="component" value="Chromosome"/>
</dbReference>
<dbReference type="GO" id="GO:0005737">
    <property type="term" value="C:cytoplasm"/>
    <property type="evidence" value="ECO:0007669"/>
    <property type="project" value="UniProtKB-SubCell"/>
</dbReference>
<dbReference type="GO" id="GO:0008897">
    <property type="term" value="F:holo-[acyl-carrier-protein] synthase activity"/>
    <property type="evidence" value="ECO:0007669"/>
    <property type="project" value="UniProtKB-UniRule"/>
</dbReference>
<dbReference type="GO" id="GO:0000287">
    <property type="term" value="F:magnesium ion binding"/>
    <property type="evidence" value="ECO:0007669"/>
    <property type="project" value="UniProtKB-UniRule"/>
</dbReference>
<dbReference type="GO" id="GO:0006633">
    <property type="term" value="P:fatty acid biosynthetic process"/>
    <property type="evidence" value="ECO:0007669"/>
    <property type="project" value="UniProtKB-UniRule"/>
</dbReference>
<dbReference type="Gene3D" id="3.90.470.20">
    <property type="entry name" value="4'-phosphopantetheinyl transferase domain"/>
    <property type="match status" value="1"/>
</dbReference>
<dbReference type="HAMAP" id="MF_00101">
    <property type="entry name" value="AcpS"/>
    <property type="match status" value="1"/>
</dbReference>
<dbReference type="InterPro" id="IPR008278">
    <property type="entry name" value="4-PPantetheinyl_Trfase_dom"/>
</dbReference>
<dbReference type="InterPro" id="IPR037143">
    <property type="entry name" value="4-PPantetheinyl_Trfase_dom_sf"/>
</dbReference>
<dbReference type="InterPro" id="IPR002582">
    <property type="entry name" value="ACPS"/>
</dbReference>
<dbReference type="InterPro" id="IPR004568">
    <property type="entry name" value="Ppantetheine-prot_Trfase_dom"/>
</dbReference>
<dbReference type="NCBIfam" id="TIGR00516">
    <property type="entry name" value="acpS"/>
    <property type="match status" value="1"/>
</dbReference>
<dbReference type="NCBIfam" id="TIGR00556">
    <property type="entry name" value="pantethn_trn"/>
    <property type="match status" value="1"/>
</dbReference>
<dbReference type="Pfam" id="PF01648">
    <property type="entry name" value="ACPS"/>
    <property type="match status" value="1"/>
</dbReference>
<dbReference type="SUPFAM" id="SSF56214">
    <property type="entry name" value="4'-phosphopantetheinyl transferase"/>
    <property type="match status" value="1"/>
</dbReference>
<protein>
    <recommendedName>
        <fullName evidence="1">Holo-[acyl-carrier-protein] synthase</fullName>
        <shortName evidence="1">Holo-ACP synthase</shortName>
        <ecNumber evidence="1">2.7.8.7</ecNumber>
    </recommendedName>
    <alternativeName>
        <fullName evidence="1">4'-phosphopantetheinyl transferase AcpS</fullName>
    </alternativeName>
</protein>
<organism>
    <name type="scientific">Chlorobaculum tepidum (strain ATCC 49652 / DSM 12025 / NBRC 103806 / TLS)</name>
    <name type="common">Chlorobium tepidum</name>
    <dbReference type="NCBI Taxonomy" id="194439"/>
    <lineage>
        <taxon>Bacteria</taxon>
        <taxon>Pseudomonadati</taxon>
        <taxon>Chlorobiota</taxon>
        <taxon>Chlorobiia</taxon>
        <taxon>Chlorobiales</taxon>
        <taxon>Chlorobiaceae</taxon>
        <taxon>Chlorobaculum</taxon>
    </lineage>
</organism>
<name>ACPS_CHLTE</name>
<proteinExistence type="inferred from homology"/>